<reference key="1">
    <citation type="journal article" date="2008" name="J. Bacteriol.">
        <title>Insights into plant cell wall degradation from the genome sequence of the soil bacterium Cellvibrio japonicus.</title>
        <authorList>
            <person name="DeBoy R.T."/>
            <person name="Mongodin E.F."/>
            <person name="Fouts D.E."/>
            <person name="Tailford L.E."/>
            <person name="Khouri H."/>
            <person name="Emerson J.B."/>
            <person name="Mohamoud Y."/>
            <person name="Watkins K."/>
            <person name="Henrissat B."/>
            <person name="Gilbert H.J."/>
            <person name="Nelson K.E."/>
        </authorList>
    </citation>
    <scope>NUCLEOTIDE SEQUENCE [LARGE SCALE GENOMIC DNA]</scope>
    <source>
        <strain>Ueda107</strain>
    </source>
</reference>
<organism>
    <name type="scientific">Cellvibrio japonicus (strain Ueda107)</name>
    <name type="common">Pseudomonas fluorescens subsp. cellulosa</name>
    <dbReference type="NCBI Taxonomy" id="498211"/>
    <lineage>
        <taxon>Bacteria</taxon>
        <taxon>Pseudomonadati</taxon>
        <taxon>Pseudomonadota</taxon>
        <taxon>Gammaproteobacteria</taxon>
        <taxon>Cellvibrionales</taxon>
        <taxon>Cellvibrionaceae</taxon>
        <taxon>Cellvibrio</taxon>
    </lineage>
</organism>
<keyword id="KW-0028">Amino-acid biosynthesis</keyword>
<keyword id="KW-0963">Cytoplasm</keyword>
<keyword id="KW-0368">Histidine biosynthesis</keyword>
<keyword id="KW-0378">Hydrolase</keyword>
<keyword id="KW-0460">Magnesium</keyword>
<keyword id="KW-0479">Metal-binding</keyword>
<keyword id="KW-1185">Reference proteome</keyword>
<keyword id="KW-0862">Zinc</keyword>
<accession>B3PK83</accession>
<proteinExistence type="inferred from homology"/>
<comment type="function">
    <text evidence="1">Catalyzes the hydrolysis of the adenine ring of phosphoribosyl-AMP.</text>
</comment>
<comment type="catalytic activity">
    <reaction evidence="1">
        <text>1-(5-phospho-beta-D-ribosyl)-5'-AMP + H2O = 1-(5-phospho-beta-D-ribosyl)-5-[(5-phospho-beta-D-ribosylamino)methylideneamino]imidazole-4-carboxamide</text>
        <dbReference type="Rhea" id="RHEA:20049"/>
        <dbReference type="ChEBI" id="CHEBI:15377"/>
        <dbReference type="ChEBI" id="CHEBI:58435"/>
        <dbReference type="ChEBI" id="CHEBI:59457"/>
        <dbReference type="EC" id="3.5.4.19"/>
    </reaction>
</comment>
<comment type="cofactor">
    <cofactor evidence="1">
        <name>Mg(2+)</name>
        <dbReference type="ChEBI" id="CHEBI:18420"/>
    </cofactor>
    <text evidence="1">Binds 1 Mg(2+) ion per subunit.</text>
</comment>
<comment type="cofactor">
    <cofactor evidence="1">
        <name>Zn(2+)</name>
        <dbReference type="ChEBI" id="CHEBI:29105"/>
    </cofactor>
    <text evidence="1">Binds 1 zinc ion per subunit.</text>
</comment>
<comment type="pathway">
    <text evidence="1">Amino-acid biosynthesis; L-histidine biosynthesis; L-histidine from 5-phospho-alpha-D-ribose 1-diphosphate: step 3/9.</text>
</comment>
<comment type="subunit">
    <text evidence="1">Homodimer.</text>
</comment>
<comment type="subcellular location">
    <subcellularLocation>
        <location evidence="1">Cytoplasm</location>
    </subcellularLocation>
</comment>
<comment type="similarity">
    <text evidence="1">Belongs to the PRA-CH family.</text>
</comment>
<feature type="chain" id="PRO_1000135340" description="Phosphoribosyl-AMP cyclohydrolase">
    <location>
        <begin position="1"/>
        <end position="126"/>
    </location>
</feature>
<feature type="binding site" evidence="1">
    <location>
        <position position="77"/>
    </location>
    <ligand>
        <name>Mg(2+)</name>
        <dbReference type="ChEBI" id="CHEBI:18420"/>
    </ligand>
</feature>
<feature type="binding site" evidence="1">
    <location>
        <position position="78"/>
    </location>
    <ligand>
        <name>Zn(2+)</name>
        <dbReference type="ChEBI" id="CHEBI:29105"/>
        <note>ligand shared between dimeric partners</note>
    </ligand>
</feature>
<feature type="binding site" evidence="1">
    <location>
        <position position="79"/>
    </location>
    <ligand>
        <name>Mg(2+)</name>
        <dbReference type="ChEBI" id="CHEBI:18420"/>
    </ligand>
</feature>
<feature type="binding site" evidence="1">
    <location>
        <position position="81"/>
    </location>
    <ligand>
        <name>Mg(2+)</name>
        <dbReference type="ChEBI" id="CHEBI:18420"/>
    </ligand>
</feature>
<feature type="binding site" evidence="1">
    <location>
        <position position="95"/>
    </location>
    <ligand>
        <name>Zn(2+)</name>
        <dbReference type="ChEBI" id="CHEBI:29105"/>
        <note>ligand shared between dimeric partners</note>
    </ligand>
</feature>
<feature type="binding site" evidence="1">
    <location>
        <position position="102"/>
    </location>
    <ligand>
        <name>Zn(2+)</name>
        <dbReference type="ChEBI" id="CHEBI:29105"/>
        <note>ligand shared between dimeric partners</note>
    </ligand>
</feature>
<dbReference type="EC" id="3.5.4.19" evidence="1"/>
<dbReference type="EMBL" id="CP000934">
    <property type="protein sequence ID" value="ACE85201.1"/>
    <property type="molecule type" value="Genomic_DNA"/>
</dbReference>
<dbReference type="RefSeq" id="WP_012486408.1">
    <property type="nucleotide sequence ID" value="NC_010995.1"/>
</dbReference>
<dbReference type="SMR" id="B3PK83"/>
<dbReference type="STRING" id="498211.CJA_0745"/>
<dbReference type="KEGG" id="cja:CJA_0745"/>
<dbReference type="eggNOG" id="COG0139">
    <property type="taxonomic scope" value="Bacteria"/>
</dbReference>
<dbReference type="HOGENOM" id="CLU_048577_5_0_6"/>
<dbReference type="OrthoDB" id="9795769at2"/>
<dbReference type="UniPathway" id="UPA00031">
    <property type="reaction ID" value="UER00008"/>
</dbReference>
<dbReference type="Proteomes" id="UP000001036">
    <property type="component" value="Chromosome"/>
</dbReference>
<dbReference type="GO" id="GO:0005737">
    <property type="term" value="C:cytoplasm"/>
    <property type="evidence" value="ECO:0007669"/>
    <property type="project" value="UniProtKB-SubCell"/>
</dbReference>
<dbReference type="GO" id="GO:0000287">
    <property type="term" value="F:magnesium ion binding"/>
    <property type="evidence" value="ECO:0007669"/>
    <property type="project" value="UniProtKB-UniRule"/>
</dbReference>
<dbReference type="GO" id="GO:0004635">
    <property type="term" value="F:phosphoribosyl-AMP cyclohydrolase activity"/>
    <property type="evidence" value="ECO:0007669"/>
    <property type="project" value="UniProtKB-UniRule"/>
</dbReference>
<dbReference type="GO" id="GO:0008270">
    <property type="term" value="F:zinc ion binding"/>
    <property type="evidence" value="ECO:0007669"/>
    <property type="project" value="UniProtKB-UniRule"/>
</dbReference>
<dbReference type="GO" id="GO:0000105">
    <property type="term" value="P:L-histidine biosynthetic process"/>
    <property type="evidence" value="ECO:0007669"/>
    <property type="project" value="UniProtKB-UniRule"/>
</dbReference>
<dbReference type="FunFam" id="3.10.20.810:FF:000001">
    <property type="entry name" value="Histidine biosynthesis bifunctional protein HisIE"/>
    <property type="match status" value="1"/>
</dbReference>
<dbReference type="Gene3D" id="3.10.20.810">
    <property type="entry name" value="Phosphoribosyl-AMP cyclohydrolase"/>
    <property type="match status" value="1"/>
</dbReference>
<dbReference type="HAMAP" id="MF_01021">
    <property type="entry name" value="HisI"/>
    <property type="match status" value="1"/>
</dbReference>
<dbReference type="InterPro" id="IPR026660">
    <property type="entry name" value="PRA-CH"/>
</dbReference>
<dbReference type="InterPro" id="IPR002496">
    <property type="entry name" value="PRib_AMP_CycHydrolase_dom"/>
</dbReference>
<dbReference type="InterPro" id="IPR038019">
    <property type="entry name" value="PRib_AMP_CycHydrolase_sf"/>
</dbReference>
<dbReference type="NCBIfam" id="NF000768">
    <property type="entry name" value="PRK00051.1"/>
    <property type="match status" value="1"/>
</dbReference>
<dbReference type="PANTHER" id="PTHR42945">
    <property type="entry name" value="HISTIDINE BIOSYNTHESIS BIFUNCTIONAL PROTEIN"/>
    <property type="match status" value="1"/>
</dbReference>
<dbReference type="PANTHER" id="PTHR42945:SF1">
    <property type="entry name" value="HISTIDINE BIOSYNTHESIS BIFUNCTIONAL PROTEIN HIS7"/>
    <property type="match status" value="1"/>
</dbReference>
<dbReference type="Pfam" id="PF01502">
    <property type="entry name" value="PRA-CH"/>
    <property type="match status" value="1"/>
</dbReference>
<dbReference type="SUPFAM" id="SSF141734">
    <property type="entry name" value="HisI-like"/>
    <property type="match status" value="1"/>
</dbReference>
<gene>
    <name evidence="1" type="primary">hisI</name>
    <name type="ordered locus">CJA_0745</name>
</gene>
<sequence>MKDWLDSVNWNADGLVPAIAQDATSGRILMMAWMNRESLRLTAEKQQAIYWSRSRNQLWHKGETSGHVQHVREIRLDCDEDVIVLQVVQEGGIACHTGRESCFYRVFRNGEWVAVDPVLKDPAEIY</sequence>
<evidence type="ECO:0000255" key="1">
    <source>
        <dbReference type="HAMAP-Rule" id="MF_01021"/>
    </source>
</evidence>
<name>HIS3_CELJU</name>
<protein>
    <recommendedName>
        <fullName evidence="1">Phosphoribosyl-AMP cyclohydrolase</fullName>
        <shortName evidence="1">PRA-CH</shortName>
        <ecNumber evidence="1">3.5.4.19</ecNumber>
    </recommendedName>
</protein>